<feature type="chain" id="PRO_0000138157" description="Probable 2,3-bisphosphoglycerate-independent phosphoglycerate mutase">
    <location>
        <begin position="1"/>
        <end position="406"/>
    </location>
</feature>
<comment type="function">
    <text evidence="1">Catalyzes the interconversion of 2-phosphoglycerate and 3-phosphoglycerate.</text>
</comment>
<comment type="catalytic activity">
    <reaction evidence="1">
        <text>(2R)-2-phosphoglycerate = (2R)-3-phosphoglycerate</text>
        <dbReference type="Rhea" id="RHEA:15901"/>
        <dbReference type="ChEBI" id="CHEBI:58272"/>
        <dbReference type="ChEBI" id="CHEBI:58289"/>
        <dbReference type="EC" id="5.4.2.12"/>
    </reaction>
</comment>
<comment type="pathway">
    <text evidence="1">Carbohydrate degradation; glycolysis; pyruvate from D-glyceraldehyde 3-phosphate: step 3/5.</text>
</comment>
<comment type="similarity">
    <text evidence="1">Belongs to the BPG-independent phosphoglycerate mutase family. A-PGAM subfamily.</text>
</comment>
<organism>
    <name type="scientific">Thermus thermophilus (strain ATCC 27634 / DSM 579 / HB8)</name>
    <dbReference type="NCBI Taxonomy" id="300852"/>
    <lineage>
        <taxon>Bacteria</taxon>
        <taxon>Thermotogati</taxon>
        <taxon>Deinococcota</taxon>
        <taxon>Deinococci</taxon>
        <taxon>Thermales</taxon>
        <taxon>Thermaceae</taxon>
        <taxon>Thermus</taxon>
    </lineage>
</organism>
<keyword id="KW-0324">Glycolysis</keyword>
<keyword id="KW-0413">Isomerase</keyword>
<keyword id="KW-1185">Reference proteome</keyword>
<evidence type="ECO:0000255" key="1">
    <source>
        <dbReference type="HAMAP-Rule" id="MF_01402"/>
    </source>
</evidence>
<proteinExistence type="inferred from homology"/>
<sequence>MDLFPVLKELAQKTPSKILLIVLDGVGGLPLEPGGPTELEAAKTPNLDRLAEESALGLLTPVYPGLAPGSGPGHLALFGYDPFRYVVGRGALSALGLGADFREGDVALRGNFATLDPEGKVVDRRAGRPPTEENQRVIAKLKEAIPRIEDVEVLFYTESEHRFLVILRGEGLEDKVTDTDPQKTGLPPLKAKALDEASERTARLVNLLSERIREVLKDEPRMNGALFRGASKKPSFPRMQEVYKLTPAAIASYPMYKGLASLVGMEVLPVEGEGDALEGKLKALKENWGRYDFFYFHVKKTDAMGEDGNFHGKVEKVELFDALLPEILALGPDVLAITGDHSTPALLKAHSWHPVPLLLKAPYLRADEARRFTEREAQRGSLGHLRGVELMPLLLAHAGKLLKYGA</sequence>
<reference key="1">
    <citation type="submission" date="2004-11" db="EMBL/GenBank/DDBJ databases">
        <title>Complete genome sequence of Thermus thermophilus HB8.</title>
        <authorList>
            <person name="Masui R."/>
            <person name="Kurokawa K."/>
            <person name="Nakagawa N."/>
            <person name="Tokunaga F."/>
            <person name="Koyama Y."/>
            <person name="Shibata T."/>
            <person name="Oshima T."/>
            <person name="Yokoyama S."/>
            <person name="Yasunaga T."/>
            <person name="Kuramitsu S."/>
        </authorList>
    </citation>
    <scope>NUCLEOTIDE SEQUENCE [LARGE SCALE GENOMIC DNA]</scope>
    <source>
        <strain>ATCC 27634 / DSM 579 / HB8</strain>
    </source>
</reference>
<name>APGM_THET8</name>
<dbReference type="EC" id="5.4.2.12" evidence="1"/>
<dbReference type="EMBL" id="AP008226">
    <property type="protein sequence ID" value="BAD69939.1"/>
    <property type="molecule type" value="Genomic_DNA"/>
</dbReference>
<dbReference type="RefSeq" id="WP_011227721.1">
    <property type="nucleotide sequence ID" value="NC_006461.1"/>
</dbReference>
<dbReference type="RefSeq" id="YP_143382.1">
    <property type="nucleotide sequence ID" value="NC_006461.1"/>
</dbReference>
<dbReference type="SMR" id="Q5SM27"/>
<dbReference type="EnsemblBacteria" id="BAD69939">
    <property type="protein sequence ID" value="BAD69939"/>
    <property type="gene ID" value="BAD69939"/>
</dbReference>
<dbReference type="GeneID" id="3167950"/>
<dbReference type="KEGG" id="ttj:TTHA0116"/>
<dbReference type="PATRIC" id="fig|300852.9.peg.114"/>
<dbReference type="eggNOG" id="COG3635">
    <property type="taxonomic scope" value="Bacteria"/>
</dbReference>
<dbReference type="HOGENOM" id="CLU_034906_2_0_0"/>
<dbReference type="PhylomeDB" id="Q5SM27"/>
<dbReference type="UniPathway" id="UPA00109">
    <property type="reaction ID" value="UER00186"/>
</dbReference>
<dbReference type="Proteomes" id="UP000000532">
    <property type="component" value="Chromosome"/>
</dbReference>
<dbReference type="GO" id="GO:0046872">
    <property type="term" value="F:metal ion binding"/>
    <property type="evidence" value="ECO:0007669"/>
    <property type="project" value="InterPro"/>
</dbReference>
<dbReference type="GO" id="GO:0004619">
    <property type="term" value="F:phosphoglycerate mutase activity"/>
    <property type="evidence" value="ECO:0007669"/>
    <property type="project" value="UniProtKB-EC"/>
</dbReference>
<dbReference type="GO" id="GO:0006096">
    <property type="term" value="P:glycolytic process"/>
    <property type="evidence" value="ECO:0007669"/>
    <property type="project" value="UniProtKB-UniRule"/>
</dbReference>
<dbReference type="CDD" id="cd16011">
    <property type="entry name" value="iPGM_like"/>
    <property type="match status" value="1"/>
</dbReference>
<dbReference type="Gene3D" id="3.40.720.10">
    <property type="entry name" value="Alkaline Phosphatase, subunit A"/>
    <property type="match status" value="2"/>
</dbReference>
<dbReference type="Gene3D" id="3.30.70.2130">
    <property type="entry name" value="Metalloenzyme domain"/>
    <property type="match status" value="1"/>
</dbReference>
<dbReference type="HAMAP" id="MF_01402_B">
    <property type="entry name" value="ApgM_B"/>
    <property type="match status" value="1"/>
</dbReference>
<dbReference type="InterPro" id="IPR017850">
    <property type="entry name" value="Alkaline_phosphatase_core_sf"/>
</dbReference>
<dbReference type="InterPro" id="IPR023665">
    <property type="entry name" value="ApgAM_prokaryotes"/>
</dbReference>
<dbReference type="InterPro" id="IPR006124">
    <property type="entry name" value="Metalloenzyme"/>
</dbReference>
<dbReference type="InterPro" id="IPR004456">
    <property type="entry name" value="Pglycerate_mutase_ApgM"/>
</dbReference>
<dbReference type="InterPro" id="IPR042253">
    <property type="entry name" value="Pglycerate_mutase_ApgM_sf"/>
</dbReference>
<dbReference type="NCBIfam" id="TIGR00306">
    <property type="entry name" value="apgM"/>
    <property type="match status" value="1"/>
</dbReference>
<dbReference type="NCBIfam" id="NF003160">
    <property type="entry name" value="PRK04135.1"/>
    <property type="match status" value="1"/>
</dbReference>
<dbReference type="PANTHER" id="PTHR31209">
    <property type="entry name" value="COFACTOR-INDEPENDENT PHOSPHOGLYCERATE MUTASE"/>
    <property type="match status" value="1"/>
</dbReference>
<dbReference type="PANTHER" id="PTHR31209:SF0">
    <property type="entry name" value="METALLOENZYME DOMAIN-CONTAINING PROTEIN"/>
    <property type="match status" value="1"/>
</dbReference>
<dbReference type="Pfam" id="PF01676">
    <property type="entry name" value="Metalloenzyme"/>
    <property type="match status" value="1"/>
</dbReference>
<dbReference type="Pfam" id="PF10143">
    <property type="entry name" value="PhosphMutase"/>
    <property type="match status" value="1"/>
</dbReference>
<dbReference type="PIRSF" id="PIRSF006392">
    <property type="entry name" value="IPGAM_arch"/>
    <property type="match status" value="1"/>
</dbReference>
<dbReference type="SUPFAM" id="SSF53649">
    <property type="entry name" value="Alkaline phosphatase-like"/>
    <property type="match status" value="1"/>
</dbReference>
<protein>
    <recommendedName>
        <fullName evidence="1">Probable 2,3-bisphosphoglycerate-independent phosphoglycerate mutase</fullName>
        <shortName evidence="1">BPG-independent PGAM</shortName>
        <shortName evidence="1">Phosphoglyceromutase</shortName>
        <shortName evidence="1">aPGAM</shortName>
        <ecNumber evidence="1">5.4.2.12</ecNumber>
    </recommendedName>
</protein>
<gene>
    <name evidence="1" type="primary">apgM</name>
    <name type="ordered locus">TTHA0116</name>
</gene>
<accession>Q5SM27</accession>